<protein>
    <recommendedName>
        <fullName evidence="1">Large ribosomal subunit protein eL15</fullName>
    </recommendedName>
    <alternativeName>
        <fullName>60S ribosomal protein L15</fullName>
    </alternativeName>
    <alternativeName>
        <fullName>RL10</fullName>
    </alternativeName>
</protein>
<name>RL15_BRANA</name>
<keyword id="KW-0687">Ribonucleoprotein</keyword>
<keyword id="KW-0689">Ribosomal protein</keyword>
<feature type="chain" id="PRO_0000127557" description="Large ribosomal subunit protein eL15">
    <location>
        <begin position="1" status="less than"/>
        <end position="88" status="greater than"/>
    </location>
</feature>
<feature type="non-terminal residue">
    <location>
        <position position="1"/>
    </location>
</feature>
<feature type="non-terminal residue">
    <location>
        <position position="88"/>
    </location>
</feature>
<dbReference type="EMBL" id="U21746">
    <property type="protein sequence ID" value="AAA86368.1"/>
    <property type="molecule type" value="mRNA"/>
</dbReference>
<dbReference type="PIR" id="T07860">
    <property type="entry name" value="T07860"/>
</dbReference>
<dbReference type="SMR" id="P46289"/>
<dbReference type="GO" id="GO:1990904">
    <property type="term" value="C:ribonucleoprotein complex"/>
    <property type="evidence" value="ECO:0007669"/>
    <property type="project" value="UniProtKB-KW"/>
</dbReference>
<dbReference type="GO" id="GO:0005840">
    <property type="term" value="C:ribosome"/>
    <property type="evidence" value="ECO:0007669"/>
    <property type="project" value="UniProtKB-KW"/>
</dbReference>
<dbReference type="GO" id="GO:0003729">
    <property type="term" value="F:mRNA binding"/>
    <property type="evidence" value="ECO:0007669"/>
    <property type="project" value="UniProtKB-ARBA"/>
</dbReference>
<dbReference type="GO" id="GO:0003735">
    <property type="term" value="F:structural constituent of ribosome"/>
    <property type="evidence" value="ECO:0007669"/>
    <property type="project" value="InterPro"/>
</dbReference>
<dbReference type="GO" id="GO:0006412">
    <property type="term" value="P:translation"/>
    <property type="evidence" value="ECO:0007669"/>
    <property type="project" value="InterPro"/>
</dbReference>
<dbReference type="Gene3D" id="3.40.1120.10">
    <property type="entry name" value="Ribosomal protein l15e"/>
    <property type="match status" value="1"/>
</dbReference>
<dbReference type="InterPro" id="IPR024794">
    <property type="entry name" value="Rbsml_eL15_core_dom_sf"/>
</dbReference>
<dbReference type="InterPro" id="IPR000439">
    <property type="entry name" value="Ribosomal_eL15"/>
</dbReference>
<dbReference type="InterPro" id="IPR020925">
    <property type="entry name" value="Ribosomal_eL15_CS"/>
</dbReference>
<dbReference type="InterPro" id="IPR012678">
    <property type="entry name" value="Ribosomal_uL23/eL15/eS24_sf"/>
</dbReference>
<dbReference type="PANTHER" id="PTHR11847:SF22">
    <property type="entry name" value="LARGE RIBOSOMAL SUBUNIT PROTEIN EL15Y-RELATED"/>
    <property type="match status" value="1"/>
</dbReference>
<dbReference type="PANTHER" id="PTHR11847">
    <property type="entry name" value="RIBOSOMAL PROTEIN L15"/>
    <property type="match status" value="1"/>
</dbReference>
<dbReference type="Pfam" id="PF00827">
    <property type="entry name" value="Ribosomal_L15e"/>
    <property type="match status" value="1"/>
</dbReference>
<dbReference type="SMART" id="SM01384">
    <property type="entry name" value="Ribosomal_L15e"/>
    <property type="match status" value="1"/>
</dbReference>
<dbReference type="SUPFAM" id="SSF54189">
    <property type="entry name" value="Ribosomal proteins S24e, L23 and L15e"/>
    <property type="match status" value="1"/>
</dbReference>
<dbReference type="PROSITE" id="PS01194">
    <property type="entry name" value="RIBOSOMAL_L15E"/>
    <property type="match status" value="1"/>
</dbReference>
<organism>
    <name type="scientific">Brassica napus</name>
    <name type="common">Rape</name>
    <dbReference type="NCBI Taxonomy" id="3708"/>
    <lineage>
        <taxon>Eukaryota</taxon>
        <taxon>Viridiplantae</taxon>
        <taxon>Streptophyta</taxon>
        <taxon>Embryophyta</taxon>
        <taxon>Tracheophyta</taxon>
        <taxon>Spermatophyta</taxon>
        <taxon>Magnoliopsida</taxon>
        <taxon>eudicotyledons</taxon>
        <taxon>Gunneridae</taxon>
        <taxon>Pentapetalae</taxon>
        <taxon>rosids</taxon>
        <taxon>malvids</taxon>
        <taxon>Brassicales</taxon>
        <taxon>Brassicaceae</taxon>
        <taxon>Brassiceae</taxon>
        <taxon>Brassica</taxon>
    </lineage>
</organism>
<sequence>HEMRFVQRVRCWEYRQQPSIVRLVRPTRPDKARRLGYKAKQGFVVYRVRVRRGGRKRPVPKVLCMVNPQTRELLNSSSRGATVLLLRS</sequence>
<comment type="similarity">
    <text evidence="1">Belongs to the eukaryotic ribosomal protein eL15 family.</text>
</comment>
<evidence type="ECO:0000305" key="1"/>
<reference key="1">
    <citation type="submission" date="1995-02" db="EMBL/GenBank/DDBJ databases">
        <authorList>
            <person name="Saez-Vasquez J."/>
        </authorList>
    </citation>
    <scope>NUCLEOTIDE SEQUENCE [MRNA]</scope>
    <source>
        <strain>cv. Samourai</strain>
    </source>
</reference>
<accession>P46289</accession>
<proteinExistence type="evidence at transcript level"/>
<gene>
    <name type="primary">RPL15</name>
</gene>